<feature type="chain" id="PRO_1000147129" description="Probable phosphatase YcdX">
    <location>
        <begin position="1"/>
        <end position="245"/>
    </location>
</feature>
<feature type="binding site" evidence="1">
    <location>
        <position position="7"/>
    </location>
    <ligand>
        <name>Zn(2+)</name>
        <dbReference type="ChEBI" id="CHEBI:29105"/>
        <label>1</label>
    </ligand>
</feature>
<feature type="binding site" evidence="1">
    <location>
        <position position="9"/>
    </location>
    <ligand>
        <name>Zn(2+)</name>
        <dbReference type="ChEBI" id="CHEBI:29105"/>
        <label>1</label>
    </ligand>
</feature>
<feature type="binding site" evidence="1">
    <location>
        <position position="15"/>
    </location>
    <ligand>
        <name>Zn(2+)</name>
        <dbReference type="ChEBI" id="CHEBI:29105"/>
        <label>2</label>
    </ligand>
</feature>
<feature type="binding site" evidence="1">
    <location>
        <position position="40"/>
    </location>
    <ligand>
        <name>Zn(2+)</name>
        <dbReference type="ChEBI" id="CHEBI:29105"/>
        <label>2</label>
    </ligand>
</feature>
<feature type="binding site" evidence="1">
    <location>
        <position position="73"/>
    </location>
    <ligand>
        <name>Zn(2+)</name>
        <dbReference type="ChEBI" id="CHEBI:29105"/>
        <label>1</label>
    </ligand>
</feature>
<feature type="binding site" evidence="1">
    <location>
        <position position="73"/>
    </location>
    <ligand>
        <name>Zn(2+)</name>
        <dbReference type="ChEBI" id="CHEBI:29105"/>
        <label>3</label>
    </ligand>
</feature>
<feature type="binding site" evidence="1">
    <location>
        <position position="101"/>
    </location>
    <ligand>
        <name>Zn(2+)</name>
        <dbReference type="ChEBI" id="CHEBI:29105"/>
        <label>3</label>
    </ligand>
</feature>
<feature type="binding site" evidence="1">
    <location>
        <position position="131"/>
    </location>
    <ligand>
        <name>Zn(2+)</name>
        <dbReference type="ChEBI" id="CHEBI:29105"/>
        <label>3</label>
    </ligand>
</feature>
<feature type="binding site" evidence="1">
    <location>
        <position position="192"/>
    </location>
    <ligand>
        <name>Zn(2+)</name>
        <dbReference type="ChEBI" id="CHEBI:29105"/>
        <label>1</label>
    </ligand>
</feature>
<feature type="binding site" evidence="1">
    <location>
        <position position="194"/>
    </location>
    <ligand>
        <name>Zn(2+)</name>
        <dbReference type="ChEBI" id="CHEBI:29105"/>
        <label>2</label>
    </ligand>
</feature>
<name>YCDX_ECO45</name>
<organism>
    <name type="scientific">Escherichia coli O45:K1 (strain S88 / ExPEC)</name>
    <dbReference type="NCBI Taxonomy" id="585035"/>
    <lineage>
        <taxon>Bacteria</taxon>
        <taxon>Pseudomonadati</taxon>
        <taxon>Pseudomonadota</taxon>
        <taxon>Gammaproteobacteria</taxon>
        <taxon>Enterobacterales</taxon>
        <taxon>Enterobacteriaceae</taxon>
        <taxon>Escherichia</taxon>
    </lineage>
</organism>
<comment type="cofactor">
    <cofactor evidence="1">
        <name>Zn(2+)</name>
        <dbReference type="ChEBI" id="CHEBI:29105"/>
    </cofactor>
    <text evidence="1">Binds 3 Zn(2+) ions per subunit.</text>
</comment>
<comment type="subunit">
    <text evidence="1">Homotrimer.</text>
</comment>
<comment type="similarity">
    <text evidence="1">Belongs to the PHP family.</text>
</comment>
<proteinExistence type="inferred from homology"/>
<protein>
    <recommendedName>
        <fullName evidence="1">Probable phosphatase YcdX</fullName>
        <ecNumber evidence="1">3.1.3.-</ecNumber>
    </recommendedName>
</protein>
<gene>
    <name evidence="1" type="primary">ycdX</name>
    <name type="ordered locus">ECS88_1045</name>
</gene>
<reference key="1">
    <citation type="journal article" date="2009" name="PLoS Genet.">
        <title>Organised genome dynamics in the Escherichia coli species results in highly diverse adaptive paths.</title>
        <authorList>
            <person name="Touchon M."/>
            <person name="Hoede C."/>
            <person name="Tenaillon O."/>
            <person name="Barbe V."/>
            <person name="Baeriswyl S."/>
            <person name="Bidet P."/>
            <person name="Bingen E."/>
            <person name="Bonacorsi S."/>
            <person name="Bouchier C."/>
            <person name="Bouvet O."/>
            <person name="Calteau A."/>
            <person name="Chiapello H."/>
            <person name="Clermont O."/>
            <person name="Cruveiller S."/>
            <person name="Danchin A."/>
            <person name="Diard M."/>
            <person name="Dossat C."/>
            <person name="Karoui M.E."/>
            <person name="Frapy E."/>
            <person name="Garry L."/>
            <person name="Ghigo J.M."/>
            <person name="Gilles A.M."/>
            <person name="Johnson J."/>
            <person name="Le Bouguenec C."/>
            <person name="Lescat M."/>
            <person name="Mangenot S."/>
            <person name="Martinez-Jehanne V."/>
            <person name="Matic I."/>
            <person name="Nassif X."/>
            <person name="Oztas S."/>
            <person name="Petit M.A."/>
            <person name="Pichon C."/>
            <person name="Rouy Z."/>
            <person name="Ruf C.S."/>
            <person name="Schneider D."/>
            <person name="Tourret J."/>
            <person name="Vacherie B."/>
            <person name="Vallenet D."/>
            <person name="Medigue C."/>
            <person name="Rocha E.P.C."/>
            <person name="Denamur E."/>
        </authorList>
    </citation>
    <scope>NUCLEOTIDE SEQUENCE [LARGE SCALE GENOMIC DNA]</scope>
    <source>
        <strain>S88 / ExPEC</strain>
    </source>
</reference>
<accession>B7MIH4</accession>
<sequence length="245" mass="26832">MYPVDLHMHTVASTHAYSTLSDYIAQAKQKGIKLFAITDHGPDMEDAPHHWHFINMRIWPRVVDGVGILRGIEANIKNVDGEIDCSGKMFDSLDLIIAGFHEPVFAPHDKATNTQAMIATIASGNVHIISHPGNPKYEIDVKAVAEAAAKHQVALEINNSSFLHSRKGSEDNCRAVAAAVRDAGGWVALGSDSHTAFTMGEFEECLKILDAVDFPPERILNVSPRRLLNFLESRGMAPIAEFADL</sequence>
<evidence type="ECO:0000255" key="1">
    <source>
        <dbReference type="HAMAP-Rule" id="MF_01561"/>
    </source>
</evidence>
<dbReference type="EC" id="3.1.3.-" evidence="1"/>
<dbReference type="EMBL" id="CU928161">
    <property type="protein sequence ID" value="CAR02374.1"/>
    <property type="molecule type" value="Genomic_DNA"/>
</dbReference>
<dbReference type="RefSeq" id="WP_000283664.1">
    <property type="nucleotide sequence ID" value="NC_011742.1"/>
</dbReference>
<dbReference type="SMR" id="B7MIH4"/>
<dbReference type="GeneID" id="93776384"/>
<dbReference type="KEGG" id="ecz:ECS88_1045"/>
<dbReference type="HOGENOM" id="CLU_061999_0_1_6"/>
<dbReference type="Proteomes" id="UP000000747">
    <property type="component" value="Chromosome"/>
</dbReference>
<dbReference type="GO" id="GO:0005829">
    <property type="term" value="C:cytosol"/>
    <property type="evidence" value="ECO:0007669"/>
    <property type="project" value="TreeGrafter"/>
</dbReference>
<dbReference type="GO" id="GO:0016791">
    <property type="term" value="F:phosphatase activity"/>
    <property type="evidence" value="ECO:0007669"/>
    <property type="project" value="UniProtKB-UniRule"/>
</dbReference>
<dbReference type="GO" id="GO:0008270">
    <property type="term" value="F:zinc ion binding"/>
    <property type="evidence" value="ECO:0007669"/>
    <property type="project" value="UniProtKB-UniRule"/>
</dbReference>
<dbReference type="GO" id="GO:0071978">
    <property type="term" value="P:bacterial-type flagellum-dependent swarming motility"/>
    <property type="evidence" value="ECO:0007669"/>
    <property type="project" value="TreeGrafter"/>
</dbReference>
<dbReference type="CDD" id="cd07437">
    <property type="entry name" value="PHP_HisPPase_Ycdx_like"/>
    <property type="match status" value="1"/>
</dbReference>
<dbReference type="FunFam" id="3.20.20.140:FF:000008">
    <property type="entry name" value="Probable phosphatase YcdX"/>
    <property type="match status" value="1"/>
</dbReference>
<dbReference type="Gene3D" id="3.20.20.140">
    <property type="entry name" value="Metal-dependent hydrolases"/>
    <property type="match status" value="1"/>
</dbReference>
<dbReference type="HAMAP" id="MF_01561">
    <property type="entry name" value="YcdX_phosphat"/>
    <property type="match status" value="1"/>
</dbReference>
<dbReference type="InterPro" id="IPR023710">
    <property type="entry name" value="Phosphatase_YcdX_put"/>
</dbReference>
<dbReference type="InterPro" id="IPR004013">
    <property type="entry name" value="PHP_dom"/>
</dbReference>
<dbReference type="InterPro" id="IPR050243">
    <property type="entry name" value="PHP_phosphatase"/>
</dbReference>
<dbReference type="InterPro" id="IPR003141">
    <property type="entry name" value="Pol/His_phosphatase_N"/>
</dbReference>
<dbReference type="InterPro" id="IPR016195">
    <property type="entry name" value="Pol/histidinol_Pase-like"/>
</dbReference>
<dbReference type="NCBIfam" id="NF006702">
    <property type="entry name" value="PRK09248.1"/>
    <property type="match status" value="1"/>
</dbReference>
<dbReference type="PANTHER" id="PTHR36928">
    <property type="entry name" value="PHOSPHATASE YCDX-RELATED"/>
    <property type="match status" value="1"/>
</dbReference>
<dbReference type="PANTHER" id="PTHR36928:SF1">
    <property type="entry name" value="PHOSPHATASE YCDX-RELATED"/>
    <property type="match status" value="1"/>
</dbReference>
<dbReference type="Pfam" id="PF02811">
    <property type="entry name" value="PHP"/>
    <property type="match status" value="1"/>
</dbReference>
<dbReference type="SMART" id="SM00481">
    <property type="entry name" value="POLIIIAc"/>
    <property type="match status" value="1"/>
</dbReference>
<dbReference type="SUPFAM" id="SSF89550">
    <property type="entry name" value="PHP domain-like"/>
    <property type="match status" value="1"/>
</dbReference>
<keyword id="KW-0378">Hydrolase</keyword>
<keyword id="KW-0479">Metal-binding</keyword>
<keyword id="KW-1185">Reference proteome</keyword>
<keyword id="KW-0862">Zinc</keyword>